<reference key="1">
    <citation type="journal article" date="2008" name="Environ. Microbiol.">
        <title>The genome of Erwinia tasmaniensis strain Et1/99, a non-pathogenic bacterium in the genus Erwinia.</title>
        <authorList>
            <person name="Kube M."/>
            <person name="Migdoll A.M."/>
            <person name="Mueller I."/>
            <person name="Kuhl H."/>
            <person name="Beck A."/>
            <person name="Reinhardt R."/>
            <person name="Geider K."/>
        </authorList>
    </citation>
    <scope>NUCLEOTIDE SEQUENCE [LARGE SCALE GENOMIC DNA]</scope>
    <source>
        <strain>DSM 17950 / CFBP 7177 / CIP 109463 / NCPPB 4357 / Et1/99</strain>
    </source>
</reference>
<keyword id="KW-0131">Cell cycle</keyword>
<keyword id="KW-0132">Cell division</keyword>
<keyword id="KW-0175">Coiled coil</keyword>
<keyword id="KW-0963">Cytoplasm</keyword>
<keyword id="KW-1185">Reference proteome</keyword>
<keyword id="KW-0717">Septation</keyword>
<organism>
    <name type="scientific">Erwinia tasmaniensis (strain DSM 17950 / CFBP 7177 / CIP 109463 / NCPPB 4357 / Et1/99)</name>
    <dbReference type="NCBI Taxonomy" id="465817"/>
    <lineage>
        <taxon>Bacteria</taxon>
        <taxon>Pseudomonadati</taxon>
        <taxon>Pseudomonadota</taxon>
        <taxon>Gammaproteobacteria</taxon>
        <taxon>Enterobacterales</taxon>
        <taxon>Erwiniaceae</taxon>
        <taxon>Erwinia</taxon>
    </lineage>
</organism>
<accession>B2VF42</accession>
<gene>
    <name evidence="1" type="primary">zapA</name>
    <name type="ordered locus">ETA_28050</name>
</gene>
<protein>
    <recommendedName>
        <fullName evidence="1">Cell division protein ZapA</fullName>
    </recommendedName>
    <alternativeName>
        <fullName evidence="1">Z ring-associated protein ZapA</fullName>
    </alternativeName>
</protein>
<feature type="chain" id="PRO_1000189515" description="Cell division protein ZapA">
    <location>
        <begin position="1"/>
        <end position="109"/>
    </location>
</feature>
<feature type="coiled-coil region" evidence="1">
    <location>
        <begin position="22"/>
        <end position="99"/>
    </location>
</feature>
<name>ZAPA_ERWT9</name>
<comment type="function">
    <text evidence="1">Activator of cell division through the inhibition of FtsZ GTPase activity, therefore promoting FtsZ assembly into bundles of protofilaments necessary for the formation of the division Z ring. It is recruited early at mid-cell but it is not essential for cell division.</text>
</comment>
<comment type="subunit">
    <text evidence="1">Homodimer. Interacts with FtsZ.</text>
</comment>
<comment type="subcellular location">
    <subcellularLocation>
        <location evidence="1">Cytoplasm</location>
    </subcellularLocation>
    <text evidence="1">Localizes at mid-cell.</text>
</comment>
<comment type="similarity">
    <text evidence="1">Belongs to the ZapA family. Type 1 subfamily.</text>
</comment>
<sequence length="109" mass="12542">MSAQPVDLQIFGRSLRVNCPPEQQDALNLAAEDLNQRLQDLKVRTRVTNTEQLVFIAALNICHELAQEKSKTRDYASNMEQRIRMLQQTIEQALLEQGRITERTGTNFE</sequence>
<evidence type="ECO:0000255" key="1">
    <source>
        <dbReference type="HAMAP-Rule" id="MF_02012"/>
    </source>
</evidence>
<dbReference type="EMBL" id="CU468135">
    <property type="protein sequence ID" value="CAO97851.1"/>
    <property type="molecule type" value="Genomic_DNA"/>
</dbReference>
<dbReference type="RefSeq" id="WP_012442508.1">
    <property type="nucleotide sequence ID" value="NC_010694.1"/>
</dbReference>
<dbReference type="SMR" id="B2VF42"/>
<dbReference type="STRING" id="465817.ETA_28050"/>
<dbReference type="KEGG" id="eta:ETA_28050"/>
<dbReference type="eggNOG" id="COG3027">
    <property type="taxonomic scope" value="Bacteria"/>
</dbReference>
<dbReference type="HOGENOM" id="CLU_116623_3_0_6"/>
<dbReference type="OrthoDB" id="5917174at2"/>
<dbReference type="Proteomes" id="UP000001726">
    <property type="component" value="Chromosome"/>
</dbReference>
<dbReference type="GO" id="GO:0032153">
    <property type="term" value="C:cell division site"/>
    <property type="evidence" value="ECO:0007669"/>
    <property type="project" value="TreeGrafter"/>
</dbReference>
<dbReference type="GO" id="GO:0030428">
    <property type="term" value="C:cell septum"/>
    <property type="evidence" value="ECO:0007669"/>
    <property type="project" value="TreeGrafter"/>
</dbReference>
<dbReference type="GO" id="GO:0005829">
    <property type="term" value="C:cytosol"/>
    <property type="evidence" value="ECO:0007669"/>
    <property type="project" value="TreeGrafter"/>
</dbReference>
<dbReference type="GO" id="GO:0005886">
    <property type="term" value="C:plasma membrane"/>
    <property type="evidence" value="ECO:0007669"/>
    <property type="project" value="UniProtKB-UniRule"/>
</dbReference>
<dbReference type="GO" id="GO:0000917">
    <property type="term" value="P:division septum assembly"/>
    <property type="evidence" value="ECO:0007669"/>
    <property type="project" value="UniProtKB-KW"/>
</dbReference>
<dbReference type="GO" id="GO:0043093">
    <property type="term" value="P:FtsZ-dependent cytokinesis"/>
    <property type="evidence" value="ECO:0007669"/>
    <property type="project" value="TreeGrafter"/>
</dbReference>
<dbReference type="GO" id="GO:0000921">
    <property type="term" value="P:septin ring assembly"/>
    <property type="evidence" value="ECO:0007669"/>
    <property type="project" value="TreeGrafter"/>
</dbReference>
<dbReference type="FunFam" id="1.20.5.50:FF:000001">
    <property type="entry name" value="Cell division protein ZapA"/>
    <property type="match status" value="1"/>
</dbReference>
<dbReference type="FunFam" id="3.30.160.880:FF:000001">
    <property type="entry name" value="Cell division protein ZapA"/>
    <property type="match status" value="1"/>
</dbReference>
<dbReference type="Gene3D" id="1.20.5.50">
    <property type="match status" value="1"/>
</dbReference>
<dbReference type="Gene3D" id="3.30.160.880">
    <property type="entry name" value="Cell division protein ZapA protomer, N-terminal domain"/>
    <property type="match status" value="1"/>
</dbReference>
<dbReference type="HAMAP" id="MF_02012">
    <property type="entry name" value="ZapA_type1"/>
    <property type="match status" value="1"/>
</dbReference>
<dbReference type="InterPro" id="IPR007838">
    <property type="entry name" value="Cell_div_ZapA-like"/>
</dbReference>
<dbReference type="InterPro" id="IPR036192">
    <property type="entry name" value="Cell_div_ZapA-like_sf"/>
</dbReference>
<dbReference type="InterPro" id="IPR023771">
    <property type="entry name" value="Cell_div_ZapA_eubact"/>
</dbReference>
<dbReference type="InterPro" id="IPR042233">
    <property type="entry name" value="Cell_div_ZapA_N"/>
</dbReference>
<dbReference type="NCBIfam" id="NF008209">
    <property type="entry name" value="PRK10972.1"/>
    <property type="match status" value="1"/>
</dbReference>
<dbReference type="PANTHER" id="PTHR34981">
    <property type="entry name" value="CELL DIVISION PROTEIN ZAPA"/>
    <property type="match status" value="1"/>
</dbReference>
<dbReference type="PANTHER" id="PTHR34981:SF1">
    <property type="entry name" value="CELL DIVISION PROTEIN ZAPA"/>
    <property type="match status" value="1"/>
</dbReference>
<dbReference type="Pfam" id="PF05164">
    <property type="entry name" value="ZapA"/>
    <property type="match status" value="1"/>
</dbReference>
<dbReference type="SUPFAM" id="SSF102829">
    <property type="entry name" value="Cell division protein ZapA-like"/>
    <property type="match status" value="1"/>
</dbReference>
<proteinExistence type="inferred from homology"/>